<reference key="1">
    <citation type="journal article" date="2007" name="J. Bacteriol.">
        <title>Genome of the opportunistic pathogen Streptococcus sanguinis.</title>
        <authorList>
            <person name="Xu P."/>
            <person name="Alves J.M."/>
            <person name="Kitten T."/>
            <person name="Brown A."/>
            <person name="Chen Z."/>
            <person name="Ozaki L.S."/>
            <person name="Manque P."/>
            <person name="Ge X."/>
            <person name="Serrano M.G."/>
            <person name="Puiu D."/>
            <person name="Hendricks S."/>
            <person name="Wang Y."/>
            <person name="Chaplin M.D."/>
            <person name="Akan D."/>
            <person name="Paik S."/>
            <person name="Peterson D.L."/>
            <person name="Macrina F.L."/>
            <person name="Buck G.A."/>
        </authorList>
    </citation>
    <scope>NUCLEOTIDE SEQUENCE [LARGE SCALE GENOMIC DNA]</scope>
    <source>
        <strain>SK36</strain>
    </source>
</reference>
<organism>
    <name type="scientific">Streptococcus sanguinis (strain SK36)</name>
    <dbReference type="NCBI Taxonomy" id="388919"/>
    <lineage>
        <taxon>Bacteria</taxon>
        <taxon>Bacillati</taxon>
        <taxon>Bacillota</taxon>
        <taxon>Bacilli</taxon>
        <taxon>Lactobacillales</taxon>
        <taxon>Streptococcaceae</taxon>
        <taxon>Streptococcus</taxon>
    </lineage>
</organism>
<keyword id="KW-0169">Cobalamin biosynthesis</keyword>
<keyword id="KW-0315">Glutamine amidotransferase</keyword>
<keyword id="KW-1185">Reference proteome</keyword>
<accession>A3CL74</accession>
<proteinExistence type="inferred from homology"/>
<dbReference type="EMBL" id="CP000387">
    <property type="protein sequence ID" value="ABN43929.1"/>
    <property type="molecule type" value="Genomic_DNA"/>
</dbReference>
<dbReference type="RefSeq" id="WP_011836536.1">
    <property type="nucleotide sequence ID" value="NC_009009.1"/>
</dbReference>
<dbReference type="RefSeq" id="YP_001034479.1">
    <property type="nucleotide sequence ID" value="NC_009009.1"/>
</dbReference>
<dbReference type="SMR" id="A3CL74"/>
<dbReference type="STRING" id="388919.SSA_0481"/>
<dbReference type="KEGG" id="ssa:SSA_0481"/>
<dbReference type="PATRIC" id="fig|388919.9.peg.465"/>
<dbReference type="eggNOG" id="COG1492">
    <property type="taxonomic scope" value="Bacteria"/>
</dbReference>
<dbReference type="HOGENOM" id="CLU_019250_2_2_9"/>
<dbReference type="OrthoDB" id="9808302at2"/>
<dbReference type="UniPathway" id="UPA00148"/>
<dbReference type="Proteomes" id="UP000002148">
    <property type="component" value="Chromosome"/>
</dbReference>
<dbReference type="GO" id="GO:0015420">
    <property type="term" value="F:ABC-type vitamin B12 transporter activity"/>
    <property type="evidence" value="ECO:0007669"/>
    <property type="project" value="UniProtKB-UniRule"/>
</dbReference>
<dbReference type="GO" id="GO:0003824">
    <property type="term" value="F:catalytic activity"/>
    <property type="evidence" value="ECO:0007669"/>
    <property type="project" value="InterPro"/>
</dbReference>
<dbReference type="GO" id="GO:0009236">
    <property type="term" value="P:cobalamin biosynthetic process"/>
    <property type="evidence" value="ECO:0007669"/>
    <property type="project" value="UniProtKB-UniRule"/>
</dbReference>
<dbReference type="CDD" id="cd05389">
    <property type="entry name" value="CobQ_N"/>
    <property type="match status" value="1"/>
</dbReference>
<dbReference type="CDD" id="cd01750">
    <property type="entry name" value="GATase1_CobQ"/>
    <property type="match status" value="1"/>
</dbReference>
<dbReference type="Gene3D" id="3.40.50.880">
    <property type="match status" value="1"/>
</dbReference>
<dbReference type="Gene3D" id="3.40.50.300">
    <property type="entry name" value="P-loop containing nucleotide triphosphate hydrolases"/>
    <property type="match status" value="1"/>
</dbReference>
<dbReference type="HAMAP" id="MF_00028">
    <property type="entry name" value="CobQ"/>
    <property type="match status" value="1"/>
</dbReference>
<dbReference type="InterPro" id="IPR029062">
    <property type="entry name" value="Class_I_gatase-like"/>
</dbReference>
<dbReference type="InterPro" id="IPR002586">
    <property type="entry name" value="CobQ/CobB/MinD/ParA_Nub-bd_dom"/>
</dbReference>
<dbReference type="InterPro" id="IPR033949">
    <property type="entry name" value="CobQ_GATase1"/>
</dbReference>
<dbReference type="InterPro" id="IPR047045">
    <property type="entry name" value="CobQ_N"/>
</dbReference>
<dbReference type="InterPro" id="IPR004459">
    <property type="entry name" value="CobQ_synth"/>
</dbReference>
<dbReference type="InterPro" id="IPR011698">
    <property type="entry name" value="GATase_3"/>
</dbReference>
<dbReference type="InterPro" id="IPR027417">
    <property type="entry name" value="P-loop_NTPase"/>
</dbReference>
<dbReference type="NCBIfam" id="TIGR00313">
    <property type="entry name" value="cobQ"/>
    <property type="match status" value="1"/>
</dbReference>
<dbReference type="NCBIfam" id="NF001989">
    <property type="entry name" value="PRK00784.1"/>
    <property type="match status" value="1"/>
</dbReference>
<dbReference type="PANTHER" id="PTHR21343:SF1">
    <property type="entry name" value="COBYRIC ACID SYNTHASE"/>
    <property type="match status" value="1"/>
</dbReference>
<dbReference type="PANTHER" id="PTHR21343">
    <property type="entry name" value="DETHIOBIOTIN SYNTHETASE"/>
    <property type="match status" value="1"/>
</dbReference>
<dbReference type="Pfam" id="PF01656">
    <property type="entry name" value="CbiA"/>
    <property type="match status" value="1"/>
</dbReference>
<dbReference type="Pfam" id="PF07685">
    <property type="entry name" value="GATase_3"/>
    <property type="match status" value="1"/>
</dbReference>
<dbReference type="SUPFAM" id="SSF52317">
    <property type="entry name" value="Class I glutamine amidotransferase-like"/>
    <property type="match status" value="1"/>
</dbReference>
<dbReference type="SUPFAM" id="SSF52540">
    <property type="entry name" value="P-loop containing nucleoside triphosphate hydrolases"/>
    <property type="match status" value="1"/>
</dbReference>
<dbReference type="PROSITE" id="PS51274">
    <property type="entry name" value="GATASE_COBBQ"/>
    <property type="match status" value="1"/>
</dbReference>
<comment type="function">
    <text evidence="1">Catalyzes amidations at positions B, D, E, and G on adenosylcobyrinic A,C-diamide. NH(2) groups are provided by glutamine, and one molecule of ATP is hydrogenolyzed for each amidation.</text>
</comment>
<comment type="pathway">
    <text evidence="1">Cofactor biosynthesis; adenosylcobalamin biosynthesis.</text>
</comment>
<comment type="similarity">
    <text evidence="1">Belongs to the CobB/CobQ family. CobQ subfamily.</text>
</comment>
<evidence type="ECO:0000255" key="1">
    <source>
        <dbReference type="HAMAP-Rule" id="MF_00028"/>
    </source>
</evidence>
<feature type="chain" id="PRO_1000002379" description="Cobyric acid synthase">
    <location>
        <begin position="1"/>
        <end position="499"/>
    </location>
</feature>
<feature type="domain" description="GATase cobBQ-type" evidence="1">
    <location>
        <begin position="251"/>
        <end position="442"/>
    </location>
</feature>
<feature type="active site" description="Nucleophile" evidence="1">
    <location>
        <position position="332"/>
    </location>
</feature>
<feature type="active site" evidence="1">
    <location>
        <position position="434"/>
    </location>
</feature>
<name>COBQ_STRSV</name>
<gene>
    <name evidence="1" type="primary">cobQ</name>
    <name type="ordered locus">SSA_0481</name>
</gene>
<sequence>MVKALMVQGTASDAGKSIIAAGLCRIFKQDGLEVVPFKSQNMALNSFITKKGDEMGRAQVVQAEAAGKEPDVRMNPVLLKPTSDRKSQVVFLGRVLRDMDAVEYHEYKQQLLPKIKEVYDELGAENDIIVIEGAGSPAEINLNDRDIVNMGMAKLVDAPVILVADIDKGGVFASIYGTIELMPPEDRKRIKGVIINKFRGDVALLQSGIDMIEELTQVPVIGVVPYAQLDIDSEDSVALVQKSRRFDSRKSLDIAVVSLKRLSNFTDFHSLEIQPDVSVRYVQPGDAIGRPDLLILPGSKNTIEDMNYLCESGLEAEILECLEQGVRIFGICGGYQLLGQKISDPLHLESDLEETRGLGILETETVLQPVKRTTQVRALHEGQELEGYEIHMGETQLADRLEPFSIIKEQNGEATERPDGAVAYGGQVQGTYLHGVFDNLEWTRQYLNELRLAKGLEPLEDQLVSIKDFKDREYDKLADVLRQSLDMEQIYQIINREEK</sequence>
<protein>
    <recommendedName>
        <fullName evidence="1">Cobyric acid synthase</fullName>
    </recommendedName>
</protein>